<proteinExistence type="inferred from homology"/>
<keyword id="KW-0414">Isoprene biosynthesis</keyword>
<keyword id="KW-0548">Nucleotidyltransferase</keyword>
<keyword id="KW-0808">Transferase</keyword>
<dbReference type="EC" id="2.7.7.60" evidence="1"/>
<dbReference type="EMBL" id="CP000076">
    <property type="protein sequence ID" value="AAY90485.1"/>
    <property type="molecule type" value="Genomic_DNA"/>
</dbReference>
<dbReference type="RefSeq" id="WP_011059545.1">
    <property type="nucleotide sequence ID" value="NC_004129.6"/>
</dbReference>
<dbReference type="SMR" id="Q4KHF4"/>
<dbReference type="STRING" id="220664.PFL_1198"/>
<dbReference type="GeneID" id="57474202"/>
<dbReference type="KEGG" id="pfl:PFL_1198"/>
<dbReference type="PATRIC" id="fig|220664.5.peg.1230"/>
<dbReference type="eggNOG" id="COG1211">
    <property type="taxonomic scope" value="Bacteria"/>
</dbReference>
<dbReference type="HOGENOM" id="CLU_061281_3_1_6"/>
<dbReference type="UniPathway" id="UPA00056">
    <property type="reaction ID" value="UER00093"/>
</dbReference>
<dbReference type="Proteomes" id="UP000008540">
    <property type="component" value="Chromosome"/>
</dbReference>
<dbReference type="GO" id="GO:0050518">
    <property type="term" value="F:2-C-methyl-D-erythritol 4-phosphate cytidylyltransferase activity"/>
    <property type="evidence" value="ECO:0007669"/>
    <property type="project" value="UniProtKB-UniRule"/>
</dbReference>
<dbReference type="GO" id="GO:0019288">
    <property type="term" value="P:isopentenyl diphosphate biosynthetic process, methylerythritol 4-phosphate pathway"/>
    <property type="evidence" value="ECO:0007669"/>
    <property type="project" value="UniProtKB-UniRule"/>
</dbReference>
<dbReference type="CDD" id="cd02516">
    <property type="entry name" value="CDP-ME_synthetase"/>
    <property type="match status" value="1"/>
</dbReference>
<dbReference type="FunFam" id="3.90.550.10:FF:000003">
    <property type="entry name" value="2-C-methyl-D-erythritol 4-phosphate cytidylyltransferase"/>
    <property type="match status" value="1"/>
</dbReference>
<dbReference type="Gene3D" id="3.90.550.10">
    <property type="entry name" value="Spore Coat Polysaccharide Biosynthesis Protein SpsA, Chain A"/>
    <property type="match status" value="1"/>
</dbReference>
<dbReference type="HAMAP" id="MF_00108">
    <property type="entry name" value="IspD"/>
    <property type="match status" value="1"/>
</dbReference>
<dbReference type="InterPro" id="IPR001228">
    <property type="entry name" value="IspD"/>
</dbReference>
<dbReference type="InterPro" id="IPR034683">
    <property type="entry name" value="IspD/TarI"/>
</dbReference>
<dbReference type="InterPro" id="IPR050088">
    <property type="entry name" value="IspD/TarI_cytidylyltransf_bact"/>
</dbReference>
<dbReference type="InterPro" id="IPR018294">
    <property type="entry name" value="ISPD_synthase_CS"/>
</dbReference>
<dbReference type="InterPro" id="IPR029044">
    <property type="entry name" value="Nucleotide-diphossugar_trans"/>
</dbReference>
<dbReference type="NCBIfam" id="TIGR00453">
    <property type="entry name" value="ispD"/>
    <property type="match status" value="1"/>
</dbReference>
<dbReference type="PANTHER" id="PTHR32125">
    <property type="entry name" value="2-C-METHYL-D-ERYTHRITOL 4-PHOSPHATE CYTIDYLYLTRANSFERASE, CHLOROPLASTIC"/>
    <property type="match status" value="1"/>
</dbReference>
<dbReference type="PANTHER" id="PTHR32125:SF4">
    <property type="entry name" value="2-C-METHYL-D-ERYTHRITOL 4-PHOSPHATE CYTIDYLYLTRANSFERASE, CHLOROPLASTIC"/>
    <property type="match status" value="1"/>
</dbReference>
<dbReference type="Pfam" id="PF01128">
    <property type="entry name" value="IspD"/>
    <property type="match status" value="1"/>
</dbReference>
<dbReference type="SUPFAM" id="SSF53448">
    <property type="entry name" value="Nucleotide-diphospho-sugar transferases"/>
    <property type="match status" value="1"/>
</dbReference>
<dbReference type="PROSITE" id="PS01295">
    <property type="entry name" value="ISPD"/>
    <property type="match status" value="1"/>
</dbReference>
<evidence type="ECO:0000255" key="1">
    <source>
        <dbReference type="HAMAP-Rule" id="MF_00108"/>
    </source>
</evidence>
<feature type="chain" id="PRO_0000237809" description="2-C-methyl-D-erythritol 4-phosphate cytidylyltransferase">
    <location>
        <begin position="1"/>
        <end position="235"/>
    </location>
</feature>
<feature type="site" description="Transition state stabilizer" evidence="1">
    <location>
        <position position="20"/>
    </location>
</feature>
<feature type="site" description="Transition state stabilizer" evidence="1">
    <location>
        <position position="27"/>
    </location>
</feature>
<feature type="site" description="Positions MEP for the nucleophilic attack" evidence="1">
    <location>
        <position position="161"/>
    </location>
</feature>
<feature type="site" description="Positions MEP for the nucleophilic attack" evidence="1">
    <location>
        <position position="217"/>
    </location>
</feature>
<sequence>MSDVLPAFWAVIPAAGVGARMAADRPKQYLQLGGRTILEHSLGCFLDHPGLKGLVVSLAVDDPYWPALACAHDSRIQRVEGGAERSGSVLNALLHLHAQGAADDDWVLVHDAARPNLSRDDLDKLLGELMDDPVGGLLAVPARDTLKRVDKHGRVLETVDRSLIWQAYTPQMFRLGALHRALADSLVADVAITDEASAMEWAGQAPRLIEGRSDNLKVTRPEDLEWLRQRWSNRR</sequence>
<comment type="function">
    <text evidence="1">Catalyzes the formation of 4-diphosphocytidyl-2-C-methyl-D-erythritol from CTP and 2-C-methyl-D-erythritol 4-phosphate (MEP).</text>
</comment>
<comment type="catalytic activity">
    <reaction evidence="1">
        <text>2-C-methyl-D-erythritol 4-phosphate + CTP + H(+) = 4-CDP-2-C-methyl-D-erythritol + diphosphate</text>
        <dbReference type="Rhea" id="RHEA:13429"/>
        <dbReference type="ChEBI" id="CHEBI:15378"/>
        <dbReference type="ChEBI" id="CHEBI:33019"/>
        <dbReference type="ChEBI" id="CHEBI:37563"/>
        <dbReference type="ChEBI" id="CHEBI:57823"/>
        <dbReference type="ChEBI" id="CHEBI:58262"/>
        <dbReference type="EC" id="2.7.7.60"/>
    </reaction>
</comment>
<comment type="pathway">
    <text evidence="1">Isoprenoid biosynthesis; isopentenyl diphosphate biosynthesis via DXP pathway; isopentenyl diphosphate from 1-deoxy-D-xylulose 5-phosphate: step 2/6.</text>
</comment>
<comment type="similarity">
    <text evidence="1">Belongs to the IspD/TarI cytidylyltransferase family. IspD subfamily.</text>
</comment>
<gene>
    <name evidence="1" type="primary">ispD</name>
    <name type="ordered locus">PFL_1198</name>
</gene>
<reference key="1">
    <citation type="journal article" date="2005" name="Nat. Biotechnol.">
        <title>Complete genome sequence of the plant commensal Pseudomonas fluorescens Pf-5.</title>
        <authorList>
            <person name="Paulsen I.T."/>
            <person name="Press C.M."/>
            <person name="Ravel J."/>
            <person name="Kobayashi D.Y."/>
            <person name="Myers G.S.A."/>
            <person name="Mavrodi D.V."/>
            <person name="DeBoy R.T."/>
            <person name="Seshadri R."/>
            <person name="Ren Q."/>
            <person name="Madupu R."/>
            <person name="Dodson R.J."/>
            <person name="Durkin A.S."/>
            <person name="Brinkac L.M."/>
            <person name="Daugherty S.C."/>
            <person name="Sullivan S.A."/>
            <person name="Rosovitz M.J."/>
            <person name="Gwinn M.L."/>
            <person name="Zhou L."/>
            <person name="Schneider D.J."/>
            <person name="Cartinhour S.W."/>
            <person name="Nelson W.C."/>
            <person name="Weidman J."/>
            <person name="Watkins K."/>
            <person name="Tran K."/>
            <person name="Khouri H."/>
            <person name="Pierson E.A."/>
            <person name="Pierson L.S. III"/>
            <person name="Thomashow L.S."/>
            <person name="Loper J.E."/>
        </authorList>
    </citation>
    <scope>NUCLEOTIDE SEQUENCE [LARGE SCALE GENOMIC DNA]</scope>
    <source>
        <strain>ATCC BAA-477 / NRRL B-23932 / Pf-5</strain>
    </source>
</reference>
<organism>
    <name type="scientific">Pseudomonas fluorescens (strain ATCC BAA-477 / NRRL B-23932 / Pf-5)</name>
    <dbReference type="NCBI Taxonomy" id="220664"/>
    <lineage>
        <taxon>Bacteria</taxon>
        <taxon>Pseudomonadati</taxon>
        <taxon>Pseudomonadota</taxon>
        <taxon>Gammaproteobacteria</taxon>
        <taxon>Pseudomonadales</taxon>
        <taxon>Pseudomonadaceae</taxon>
        <taxon>Pseudomonas</taxon>
    </lineage>
</organism>
<accession>Q4KHF4</accession>
<name>ISPD_PSEF5</name>
<protein>
    <recommendedName>
        <fullName evidence="1">2-C-methyl-D-erythritol 4-phosphate cytidylyltransferase</fullName>
        <ecNumber evidence="1">2.7.7.60</ecNumber>
    </recommendedName>
    <alternativeName>
        <fullName evidence="1">4-diphosphocytidyl-2C-methyl-D-erythritol synthase</fullName>
    </alternativeName>
    <alternativeName>
        <fullName evidence="1">MEP cytidylyltransferase</fullName>
        <shortName evidence="1">MCT</shortName>
    </alternativeName>
</protein>